<organism>
    <name type="scientific">Mycobacterium tuberculosis (strain CDC 1551 / Oshkosh)</name>
    <dbReference type="NCBI Taxonomy" id="83331"/>
    <lineage>
        <taxon>Bacteria</taxon>
        <taxon>Bacillati</taxon>
        <taxon>Actinomycetota</taxon>
        <taxon>Actinomycetes</taxon>
        <taxon>Mycobacteriales</taxon>
        <taxon>Mycobacteriaceae</taxon>
        <taxon>Mycobacterium</taxon>
        <taxon>Mycobacterium tuberculosis complex</taxon>
    </lineage>
</organism>
<gene>
    <name evidence="1" type="primary">hemE</name>
    <name type="ordered locus">MT2752</name>
</gene>
<proteinExistence type="inferred from homology"/>
<feature type="chain" id="PRO_0000428555" description="Uroporphyrinogen decarboxylase">
    <location>
        <begin position="1"/>
        <end position="357"/>
    </location>
</feature>
<feature type="binding site" evidence="1">
    <location>
        <begin position="30"/>
        <end position="34"/>
    </location>
    <ligand>
        <name>substrate</name>
    </ligand>
</feature>
<feature type="binding site" evidence="1">
    <location>
        <position position="79"/>
    </location>
    <ligand>
        <name>substrate</name>
    </ligand>
</feature>
<feature type="binding site" evidence="1">
    <location>
        <position position="154"/>
    </location>
    <ligand>
        <name>substrate</name>
    </ligand>
</feature>
<feature type="binding site" evidence="1">
    <location>
        <position position="209"/>
    </location>
    <ligand>
        <name>substrate</name>
    </ligand>
</feature>
<feature type="binding site" evidence="1">
    <location>
        <position position="336"/>
    </location>
    <ligand>
        <name>substrate</name>
    </ligand>
</feature>
<feature type="site" description="Transition state stabilizer" evidence="1">
    <location>
        <position position="79"/>
    </location>
</feature>
<dbReference type="EC" id="4.1.1.37" evidence="1"/>
<dbReference type="EMBL" id="AE000516">
    <property type="protein sequence ID" value="AAK47067.1"/>
    <property type="status" value="ALT_INIT"/>
    <property type="molecule type" value="Genomic_DNA"/>
</dbReference>
<dbReference type="PIR" id="G70869">
    <property type="entry name" value="G70869"/>
</dbReference>
<dbReference type="RefSeq" id="WP_003413873.1">
    <property type="nucleotide sequence ID" value="NZ_KK341227.1"/>
</dbReference>
<dbReference type="SMR" id="P9WFE0"/>
<dbReference type="GeneID" id="45426666"/>
<dbReference type="KEGG" id="mtc:MT2752"/>
<dbReference type="PATRIC" id="fig|83331.31.peg.2963"/>
<dbReference type="HOGENOM" id="CLU_040933_0_1_11"/>
<dbReference type="UniPathway" id="UPA00251">
    <property type="reaction ID" value="UER00321"/>
</dbReference>
<dbReference type="Proteomes" id="UP000001020">
    <property type="component" value="Chromosome"/>
</dbReference>
<dbReference type="GO" id="GO:0005829">
    <property type="term" value="C:cytosol"/>
    <property type="evidence" value="ECO:0007669"/>
    <property type="project" value="TreeGrafter"/>
</dbReference>
<dbReference type="GO" id="GO:0004853">
    <property type="term" value="F:uroporphyrinogen decarboxylase activity"/>
    <property type="evidence" value="ECO:0007669"/>
    <property type="project" value="UniProtKB-UniRule"/>
</dbReference>
<dbReference type="GO" id="GO:0006782">
    <property type="term" value="P:protoporphyrinogen IX biosynthetic process"/>
    <property type="evidence" value="ECO:0007669"/>
    <property type="project" value="UniProtKB-UniRule"/>
</dbReference>
<dbReference type="CDD" id="cd00717">
    <property type="entry name" value="URO-D"/>
    <property type="match status" value="1"/>
</dbReference>
<dbReference type="FunFam" id="3.20.20.210:FF:000007">
    <property type="entry name" value="Uroporphyrinogen decarboxylase"/>
    <property type="match status" value="1"/>
</dbReference>
<dbReference type="Gene3D" id="3.20.20.210">
    <property type="match status" value="1"/>
</dbReference>
<dbReference type="HAMAP" id="MF_00218">
    <property type="entry name" value="URO_D"/>
    <property type="match status" value="1"/>
</dbReference>
<dbReference type="InterPro" id="IPR038071">
    <property type="entry name" value="UROD/MetE-like_sf"/>
</dbReference>
<dbReference type="InterPro" id="IPR006361">
    <property type="entry name" value="Uroporphyrinogen_deCO2ase_HemE"/>
</dbReference>
<dbReference type="InterPro" id="IPR000257">
    <property type="entry name" value="Uroporphyrinogen_deCOase"/>
</dbReference>
<dbReference type="NCBIfam" id="TIGR01464">
    <property type="entry name" value="hemE"/>
    <property type="match status" value="1"/>
</dbReference>
<dbReference type="PANTHER" id="PTHR21091">
    <property type="entry name" value="METHYLTETRAHYDROFOLATE:HOMOCYSTEINE METHYLTRANSFERASE RELATED"/>
    <property type="match status" value="1"/>
</dbReference>
<dbReference type="PANTHER" id="PTHR21091:SF169">
    <property type="entry name" value="UROPORPHYRINOGEN DECARBOXYLASE"/>
    <property type="match status" value="1"/>
</dbReference>
<dbReference type="Pfam" id="PF01208">
    <property type="entry name" value="URO-D"/>
    <property type="match status" value="1"/>
</dbReference>
<dbReference type="SUPFAM" id="SSF51726">
    <property type="entry name" value="UROD/MetE-like"/>
    <property type="match status" value="1"/>
</dbReference>
<dbReference type="PROSITE" id="PS00906">
    <property type="entry name" value="UROD_1"/>
    <property type="match status" value="1"/>
</dbReference>
<dbReference type="PROSITE" id="PS00907">
    <property type="entry name" value="UROD_2"/>
    <property type="match status" value="1"/>
</dbReference>
<sequence length="357" mass="37606">MSTRRDLPQSPYLAAVTGRKPSRVPVWFMRQAGRSLPEYRALRERYSMLAACFEPDVACEITLQPIRRYDVDAAILFSDIVVPLRAAGVDLDIVADVGPVIADPVRTAADVAAMKPLDPQAIQPVLVAASLLVAELGDVPLIGFAGAPFTLASYLVEGGPSRHHAHVKAMMLAEPASWHALMAKLTDLTIAFLVGQIDAGVDAIQVFDSWAGALSPIDYRQYVLPHSARVFAALGEHGVPMTHFGVGTAELLGAMSEAVTAGERPGRGAVVGVDWRTPLTDAAARVVPGTALQGNLDPAVVLAGWPAVERAARAVVDDGRRAVDAGAAGHIFNLGHGVLPESDPAVLADLVSLVHSL</sequence>
<protein>
    <recommendedName>
        <fullName evidence="1">Uroporphyrinogen decarboxylase</fullName>
        <shortName evidence="1">UPD</shortName>
        <shortName evidence="1">URO-D</shortName>
        <ecNumber evidence="1">4.1.1.37</ecNumber>
    </recommendedName>
</protein>
<accession>P9WFE0</accession>
<accession>L0TAK1</accession>
<accession>O53231</accession>
<name>DCUP_MYCTO</name>
<evidence type="ECO:0000255" key="1">
    <source>
        <dbReference type="HAMAP-Rule" id="MF_00218"/>
    </source>
</evidence>
<evidence type="ECO:0000305" key="2"/>
<reference key="1">
    <citation type="journal article" date="2002" name="J. Bacteriol.">
        <title>Whole-genome comparison of Mycobacterium tuberculosis clinical and laboratory strains.</title>
        <authorList>
            <person name="Fleischmann R.D."/>
            <person name="Alland D."/>
            <person name="Eisen J.A."/>
            <person name="Carpenter L."/>
            <person name="White O."/>
            <person name="Peterson J.D."/>
            <person name="DeBoy R.T."/>
            <person name="Dodson R.J."/>
            <person name="Gwinn M.L."/>
            <person name="Haft D.H."/>
            <person name="Hickey E.K."/>
            <person name="Kolonay J.F."/>
            <person name="Nelson W.C."/>
            <person name="Umayam L.A."/>
            <person name="Ermolaeva M.D."/>
            <person name="Salzberg S.L."/>
            <person name="Delcher A."/>
            <person name="Utterback T.R."/>
            <person name="Weidman J.F."/>
            <person name="Khouri H.M."/>
            <person name="Gill J."/>
            <person name="Mikula A."/>
            <person name="Bishai W."/>
            <person name="Jacobs W.R. Jr."/>
            <person name="Venter J.C."/>
            <person name="Fraser C.M."/>
        </authorList>
    </citation>
    <scope>NUCLEOTIDE SEQUENCE [LARGE SCALE GENOMIC DNA]</scope>
    <source>
        <strain>CDC 1551 / Oshkosh</strain>
    </source>
</reference>
<keyword id="KW-0963">Cytoplasm</keyword>
<keyword id="KW-0210">Decarboxylase</keyword>
<keyword id="KW-0456">Lyase</keyword>
<keyword id="KW-0627">Porphyrin biosynthesis</keyword>
<keyword id="KW-1185">Reference proteome</keyword>
<comment type="function">
    <text evidence="1">Catalyzes the decarboxylation of four acetate groups of uroporphyrinogen-III to yield coproporphyrinogen-III.</text>
</comment>
<comment type="catalytic activity">
    <reaction evidence="1">
        <text>uroporphyrinogen III + 4 H(+) = coproporphyrinogen III + 4 CO2</text>
        <dbReference type="Rhea" id="RHEA:19865"/>
        <dbReference type="ChEBI" id="CHEBI:15378"/>
        <dbReference type="ChEBI" id="CHEBI:16526"/>
        <dbReference type="ChEBI" id="CHEBI:57308"/>
        <dbReference type="ChEBI" id="CHEBI:57309"/>
        <dbReference type="EC" id="4.1.1.37"/>
    </reaction>
</comment>
<comment type="pathway">
    <text evidence="1">Porphyrin-containing compound metabolism; protoporphyrin-IX biosynthesis; coproporphyrinogen-III from 5-aminolevulinate: step 4/4.</text>
</comment>
<comment type="subunit">
    <text evidence="1">Homodimer.</text>
</comment>
<comment type="subcellular location">
    <subcellularLocation>
        <location evidence="1">Cytoplasm</location>
    </subcellularLocation>
</comment>
<comment type="similarity">
    <text evidence="1">Belongs to the uroporphyrinogen decarboxylase family.</text>
</comment>
<comment type="sequence caution" evidence="2">
    <conflict type="erroneous initiation">
        <sequence resource="EMBL-CDS" id="AAK47067"/>
    </conflict>
</comment>